<dbReference type="EC" id="5.3.1.6" evidence="1"/>
<dbReference type="EMBL" id="CP000016">
    <property type="protein sequence ID" value="AAZ40894.1"/>
    <property type="molecule type" value="Genomic_DNA"/>
</dbReference>
<dbReference type="RefSeq" id="WP_011282801.1">
    <property type="nucleotide sequence ID" value="NC_007292.1"/>
</dbReference>
<dbReference type="SMR" id="Q493E8"/>
<dbReference type="STRING" id="291272.BPEN_263"/>
<dbReference type="KEGG" id="bpn:BPEN_263"/>
<dbReference type="eggNOG" id="COG0120">
    <property type="taxonomic scope" value="Bacteria"/>
</dbReference>
<dbReference type="HOGENOM" id="CLU_056590_1_1_6"/>
<dbReference type="OrthoDB" id="5870696at2"/>
<dbReference type="UniPathway" id="UPA00115">
    <property type="reaction ID" value="UER00412"/>
</dbReference>
<dbReference type="Proteomes" id="UP000007794">
    <property type="component" value="Chromosome"/>
</dbReference>
<dbReference type="GO" id="GO:0005829">
    <property type="term" value="C:cytosol"/>
    <property type="evidence" value="ECO:0007669"/>
    <property type="project" value="TreeGrafter"/>
</dbReference>
<dbReference type="GO" id="GO:0004751">
    <property type="term" value="F:ribose-5-phosphate isomerase activity"/>
    <property type="evidence" value="ECO:0007669"/>
    <property type="project" value="UniProtKB-UniRule"/>
</dbReference>
<dbReference type="GO" id="GO:0006014">
    <property type="term" value="P:D-ribose metabolic process"/>
    <property type="evidence" value="ECO:0007669"/>
    <property type="project" value="TreeGrafter"/>
</dbReference>
<dbReference type="GO" id="GO:0009052">
    <property type="term" value="P:pentose-phosphate shunt, non-oxidative branch"/>
    <property type="evidence" value="ECO:0007669"/>
    <property type="project" value="UniProtKB-UniRule"/>
</dbReference>
<dbReference type="CDD" id="cd01398">
    <property type="entry name" value="RPI_A"/>
    <property type="match status" value="1"/>
</dbReference>
<dbReference type="FunFam" id="3.30.70.260:FF:000004">
    <property type="entry name" value="Ribose-5-phosphate isomerase A"/>
    <property type="match status" value="1"/>
</dbReference>
<dbReference type="FunFam" id="3.40.50.1360:FF:000001">
    <property type="entry name" value="Ribose-5-phosphate isomerase A"/>
    <property type="match status" value="1"/>
</dbReference>
<dbReference type="Gene3D" id="3.30.70.260">
    <property type="match status" value="1"/>
</dbReference>
<dbReference type="Gene3D" id="3.40.50.1360">
    <property type="match status" value="1"/>
</dbReference>
<dbReference type="HAMAP" id="MF_00170">
    <property type="entry name" value="Rib_5P_isom_A"/>
    <property type="match status" value="1"/>
</dbReference>
<dbReference type="InterPro" id="IPR037171">
    <property type="entry name" value="NagB/RpiA_transferase-like"/>
</dbReference>
<dbReference type="InterPro" id="IPR020672">
    <property type="entry name" value="Ribose5P_isomerase_typA_subgr"/>
</dbReference>
<dbReference type="InterPro" id="IPR004788">
    <property type="entry name" value="Ribose5P_isomerase_type_A"/>
</dbReference>
<dbReference type="NCBIfam" id="NF001924">
    <property type="entry name" value="PRK00702.1"/>
    <property type="match status" value="1"/>
</dbReference>
<dbReference type="NCBIfam" id="TIGR00021">
    <property type="entry name" value="rpiA"/>
    <property type="match status" value="1"/>
</dbReference>
<dbReference type="PANTHER" id="PTHR11934">
    <property type="entry name" value="RIBOSE-5-PHOSPHATE ISOMERASE"/>
    <property type="match status" value="1"/>
</dbReference>
<dbReference type="PANTHER" id="PTHR11934:SF0">
    <property type="entry name" value="RIBOSE-5-PHOSPHATE ISOMERASE"/>
    <property type="match status" value="1"/>
</dbReference>
<dbReference type="Pfam" id="PF06026">
    <property type="entry name" value="Rib_5-P_isom_A"/>
    <property type="match status" value="1"/>
</dbReference>
<dbReference type="SUPFAM" id="SSF75445">
    <property type="entry name" value="D-ribose-5-phosphate isomerase (RpiA), lid domain"/>
    <property type="match status" value="1"/>
</dbReference>
<dbReference type="SUPFAM" id="SSF100950">
    <property type="entry name" value="NagB/RpiA/CoA transferase-like"/>
    <property type="match status" value="1"/>
</dbReference>
<keyword id="KW-0413">Isomerase</keyword>
<keyword id="KW-1185">Reference proteome</keyword>
<name>RPIA_BLOPB</name>
<comment type="function">
    <text evidence="1">Catalyzes the reversible conversion of ribose-5-phosphate to ribulose 5-phosphate.</text>
</comment>
<comment type="catalytic activity">
    <reaction evidence="1">
        <text>aldehydo-D-ribose 5-phosphate = D-ribulose 5-phosphate</text>
        <dbReference type="Rhea" id="RHEA:14657"/>
        <dbReference type="ChEBI" id="CHEBI:58121"/>
        <dbReference type="ChEBI" id="CHEBI:58273"/>
        <dbReference type="EC" id="5.3.1.6"/>
    </reaction>
</comment>
<comment type="pathway">
    <text evidence="1">Carbohydrate degradation; pentose phosphate pathway; D-ribose 5-phosphate from D-ribulose 5-phosphate (non-oxidative stage): step 1/1.</text>
</comment>
<comment type="subunit">
    <text evidence="1">Homodimer.</text>
</comment>
<comment type="similarity">
    <text evidence="1">Belongs to the ribose 5-phosphate isomerase family.</text>
</comment>
<proteinExistence type="inferred from homology"/>
<organism>
    <name type="scientific">Blochmanniella pennsylvanica (strain BPEN)</name>
    <dbReference type="NCBI Taxonomy" id="291272"/>
    <lineage>
        <taxon>Bacteria</taxon>
        <taxon>Pseudomonadati</taxon>
        <taxon>Pseudomonadota</taxon>
        <taxon>Gammaproteobacteria</taxon>
        <taxon>Enterobacterales</taxon>
        <taxon>Enterobacteriaceae</taxon>
        <taxon>ant endosymbionts</taxon>
        <taxon>Candidatus Blochmanniella</taxon>
    </lineage>
</organism>
<protein>
    <recommendedName>
        <fullName evidence="1">Ribose-5-phosphate isomerase A</fullName>
        <ecNumber evidence="1">5.3.1.6</ecNumber>
    </recommendedName>
    <alternativeName>
        <fullName evidence="1">Phosphoriboisomerase A</fullName>
        <shortName evidence="1">PRI</shortName>
    </alternativeName>
</protein>
<accession>Q493E8</accession>
<gene>
    <name evidence="1" type="primary">rpiA</name>
    <name type="ordered locus">BPEN_263</name>
</gene>
<reference key="1">
    <citation type="journal article" date="2005" name="Genome Res.">
        <title>Genome sequence of Blochmannia pennsylvanicus indicates parallel evolutionary trends among bacterial mutualists of insects.</title>
        <authorList>
            <person name="Degnan P.H."/>
            <person name="Lazarus A.B."/>
            <person name="Wernegreen J.J."/>
        </authorList>
    </citation>
    <scope>NUCLEOTIDE SEQUENCE [LARGE SCALE GENOMIC DNA]</scope>
    <source>
        <strain>BPEN</strain>
    </source>
</reference>
<feature type="chain" id="PRO_1000058297" description="Ribose-5-phosphate isomerase A">
    <location>
        <begin position="1"/>
        <end position="218"/>
    </location>
</feature>
<feature type="active site" description="Proton acceptor" evidence="1">
    <location>
        <position position="103"/>
    </location>
</feature>
<feature type="binding site" evidence="1">
    <location>
        <begin position="28"/>
        <end position="31"/>
    </location>
    <ligand>
        <name>substrate</name>
    </ligand>
</feature>
<feature type="binding site" evidence="1">
    <location>
        <begin position="81"/>
        <end position="84"/>
    </location>
    <ligand>
        <name>substrate</name>
    </ligand>
</feature>
<feature type="binding site" evidence="1">
    <location>
        <begin position="94"/>
        <end position="97"/>
    </location>
    <ligand>
        <name>substrate</name>
    </ligand>
</feature>
<feature type="binding site" evidence="1">
    <location>
        <position position="121"/>
    </location>
    <ligand>
        <name>substrate</name>
    </ligand>
</feature>
<evidence type="ECO:0000255" key="1">
    <source>
        <dbReference type="HAMAP-Rule" id="MF_00170"/>
    </source>
</evidence>
<sequence length="218" mass="23729">MVQNKLKKSVGWAALKYVQSSRIIGVGTGSTVTYFIEALNSIKEKIEGVVSSSNYSSNQLKKIGIPLCNLNSLHELDVYVDSADEIDSHMQMIKGKGGALTKEKIIAAAAKKFICIVDSSKQVNILGRGPLPIEVIPMARSLVARELVRLGGLPEYRHNVITDNGNNILDVYNMKIVNASLLETKINNIPGVVSVGIFAKRRADIVLIGTREGIKIIE</sequence>